<comment type="function">
    <text evidence="1">Catalyzes the 2'-O-methylation at nucleotide C2498 in 23S rRNA.</text>
</comment>
<comment type="catalytic activity">
    <reaction evidence="1">
        <text>cytidine(2498) in 23S rRNA + S-adenosyl-L-methionine = 2'-O-methylcytidine(2498) in 23S rRNA + S-adenosyl-L-homocysteine + H(+)</text>
        <dbReference type="Rhea" id="RHEA:42788"/>
        <dbReference type="Rhea" id="RHEA-COMP:10244"/>
        <dbReference type="Rhea" id="RHEA-COMP:10245"/>
        <dbReference type="ChEBI" id="CHEBI:15378"/>
        <dbReference type="ChEBI" id="CHEBI:57856"/>
        <dbReference type="ChEBI" id="CHEBI:59789"/>
        <dbReference type="ChEBI" id="CHEBI:74495"/>
        <dbReference type="ChEBI" id="CHEBI:82748"/>
        <dbReference type="EC" id="2.1.1.186"/>
    </reaction>
</comment>
<comment type="subunit">
    <text evidence="1">Monomer.</text>
</comment>
<comment type="subcellular location">
    <subcellularLocation>
        <location evidence="1">Cytoplasm</location>
    </subcellularLocation>
</comment>
<comment type="similarity">
    <text evidence="1">Belongs to the class I-like SAM-binding methyltransferase superfamily. RNA methyltransferase RlmE family. RlmM subfamily.</text>
</comment>
<name>RLMM_PSEP7</name>
<reference key="1">
    <citation type="submission" date="2007-06" db="EMBL/GenBank/DDBJ databases">
        <authorList>
            <person name="Dodson R.J."/>
            <person name="Harkins D."/>
            <person name="Paulsen I.T."/>
        </authorList>
    </citation>
    <scope>NUCLEOTIDE SEQUENCE [LARGE SCALE GENOMIC DNA]</scope>
    <source>
        <strain>DSM 24068 / PA7</strain>
    </source>
</reference>
<evidence type="ECO:0000255" key="1">
    <source>
        <dbReference type="HAMAP-Rule" id="MF_01551"/>
    </source>
</evidence>
<accession>A6V7T6</accession>
<gene>
    <name evidence="1" type="primary">rlmM</name>
    <name type="ordered locus">PSPA7_3767</name>
</gene>
<protein>
    <recommendedName>
        <fullName evidence="1">Ribosomal RNA large subunit methyltransferase M</fullName>
        <ecNumber evidence="1">2.1.1.186</ecNumber>
    </recommendedName>
    <alternativeName>
        <fullName evidence="1">23S rRNA (cytidine2498-2'-O)-methyltransferase</fullName>
    </alternativeName>
    <alternativeName>
        <fullName evidence="1">23S rRNA 2'-O-ribose methyltransferase RlmM</fullName>
    </alternativeName>
</protein>
<keyword id="KW-0963">Cytoplasm</keyword>
<keyword id="KW-0489">Methyltransferase</keyword>
<keyword id="KW-0698">rRNA processing</keyword>
<keyword id="KW-0949">S-adenosyl-L-methionine</keyword>
<keyword id="KW-0808">Transferase</keyword>
<organism>
    <name type="scientific">Pseudomonas paraeruginosa (strain DSM 24068 / PA7)</name>
    <name type="common">Pseudomonas aeruginosa (strain PA7)</name>
    <dbReference type="NCBI Taxonomy" id="381754"/>
    <lineage>
        <taxon>Bacteria</taxon>
        <taxon>Pseudomonadati</taxon>
        <taxon>Pseudomonadota</taxon>
        <taxon>Gammaproteobacteria</taxon>
        <taxon>Pseudomonadales</taxon>
        <taxon>Pseudomonadaceae</taxon>
        <taxon>Pseudomonas</taxon>
        <taxon>Pseudomonas paraeruginosa</taxon>
    </lineage>
</organism>
<sequence length="352" mass="40376">MNTLLMHCRPGFEGEVCAEIAEHAATLEIPGYARSKPASAHVEFVCQDVDGAERLMRRLRFAELIFPRQWARGPGFIELPESQRIEVLLEELASYPVCGSLWLEVLDTNAGKEVSTFCRKFEKPLRAALVKAGRLQEDLALPRLLLTFRSGREVFVGLAEPRNSALWPMGIPRLKFPREAPSRSTLKLEEAWHQFIPRQEWDKRLAPDMLAVDLGAAPGGWTWQLVNREMRVTAVDNGPMAENLMYSGLVDHQKVDGYQYRPRQRVDWMVCDIVEKPARTGALIETWIGEGLCREAVVNLKLPMKQRYAEVRKILQRLRESFDARGLKVAFGCKQLYHDREEVTCHLRRLER</sequence>
<proteinExistence type="inferred from homology"/>
<dbReference type="EC" id="2.1.1.186" evidence="1"/>
<dbReference type="EMBL" id="CP000744">
    <property type="protein sequence ID" value="ABR83387.1"/>
    <property type="molecule type" value="Genomic_DNA"/>
</dbReference>
<dbReference type="RefSeq" id="WP_012076342.1">
    <property type="nucleotide sequence ID" value="NC_009656.1"/>
</dbReference>
<dbReference type="SMR" id="A6V7T6"/>
<dbReference type="KEGG" id="pap:PSPA7_3767"/>
<dbReference type="HOGENOM" id="CLU_043780_0_0_6"/>
<dbReference type="Proteomes" id="UP000001582">
    <property type="component" value="Chromosome"/>
</dbReference>
<dbReference type="GO" id="GO:0005737">
    <property type="term" value="C:cytoplasm"/>
    <property type="evidence" value="ECO:0007669"/>
    <property type="project" value="UniProtKB-SubCell"/>
</dbReference>
<dbReference type="GO" id="GO:0008757">
    <property type="term" value="F:S-adenosylmethionine-dependent methyltransferase activity"/>
    <property type="evidence" value="ECO:0007669"/>
    <property type="project" value="UniProtKB-UniRule"/>
</dbReference>
<dbReference type="GO" id="GO:0032259">
    <property type="term" value="P:methylation"/>
    <property type="evidence" value="ECO:0007669"/>
    <property type="project" value="UniProtKB-KW"/>
</dbReference>
<dbReference type="GO" id="GO:0006364">
    <property type="term" value="P:rRNA processing"/>
    <property type="evidence" value="ECO:0007669"/>
    <property type="project" value="UniProtKB-UniRule"/>
</dbReference>
<dbReference type="Gene3D" id="3.30.2300.20">
    <property type="match status" value="1"/>
</dbReference>
<dbReference type="Gene3D" id="3.30.70.2810">
    <property type="match status" value="1"/>
</dbReference>
<dbReference type="Gene3D" id="3.40.50.150">
    <property type="entry name" value="Vaccinia Virus protein VP39"/>
    <property type="match status" value="1"/>
</dbReference>
<dbReference type="HAMAP" id="MF_01551">
    <property type="entry name" value="23SrRNA_methyltr_M"/>
    <property type="match status" value="1"/>
</dbReference>
<dbReference type="InterPro" id="IPR040739">
    <property type="entry name" value="RlmM_FDX"/>
</dbReference>
<dbReference type="InterPro" id="IPR048646">
    <property type="entry name" value="RlmM_THUMP-like"/>
</dbReference>
<dbReference type="InterPro" id="IPR002877">
    <property type="entry name" value="RNA_MeTrfase_FtsJ_dom"/>
</dbReference>
<dbReference type="InterPro" id="IPR011224">
    <property type="entry name" value="rRNA_MeTrfase_M"/>
</dbReference>
<dbReference type="InterPro" id="IPR029063">
    <property type="entry name" value="SAM-dependent_MTases_sf"/>
</dbReference>
<dbReference type="NCBIfam" id="NF008734">
    <property type="entry name" value="PRK11760.1"/>
    <property type="match status" value="1"/>
</dbReference>
<dbReference type="PANTHER" id="PTHR37524">
    <property type="entry name" value="RIBOSOMAL RNA LARGE SUBUNIT METHYLTRANSFERASE M"/>
    <property type="match status" value="1"/>
</dbReference>
<dbReference type="PANTHER" id="PTHR37524:SF2">
    <property type="entry name" value="RIBOSOMAL RNA METHYLTRANSFERASE FTSJ DOMAIN-CONTAINING PROTEIN"/>
    <property type="match status" value="1"/>
</dbReference>
<dbReference type="Pfam" id="PF01728">
    <property type="entry name" value="FtsJ"/>
    <property type="match status" value="1"/>
</dbReference>
<dbReference type="Pfam" id="PF18125">
    <property type="entry name" value="RlmM_FDX"/>
    <property type="match status" value="1"/>
</dbReference>
<dbReference type="Pfam" id="PF21239">
    <property type="entry name" value="RLMM_N"/>
    <property type="match status" value="1"/>
</dbReference>
<dbReference type="PIRSF" id="PIRSF028774">
    <property type="entry name" value="UCP028774"/>
    <property type="match status" value="1"/>
</dbReference>
<dbReference type="SUPFAM" id="SSF53335">
    <property type="entry name" value="S-adenosyl-L-methionine-dependent methyltransferases"/>
    <property type="match status" value="1"/>
</dbReference>
<feature type="chain" id="PRO_0000314524" description="Ribosomal RNA large subunit methyltransferase M">
    <location>
        <begin position="1"/>
        <end position="352"/>
    </location>
</feature>
<feature type="active site" description="Proton acceptor" evidence="1">
    <location>
        <position position="301"/>
    </location>
</feature>
<feature type="binding site" evidence="1">
    <location>
        <position position="184"/>
    </location>
    <ligand>
        <name>S-adenosyl-L-methionine</name>
        <dbReference type="ChEBI" id="CHEBI:59789"/>
    </ligand>
</feature>
<feature type="binding site" evidence="1">
    <location>
        <begin position="217"/>
        <end position="220"/>
    </location>
    <ligand>
        <name>S-adenosyl-L-methionine</name>
        <dbReference type="ChEBI" id="CHEBI:59789"/>
    </ligand>
</feature>
<feature type="binding site" evidence="1">
    <location>
        <position position="236"/>
    </location>
    <ligand>
        <name>S-adenosyl-L-methionine</name>
        <dbReference type="ChEBI" id="CHEBI:59789"/>
    </ligand>
</feature>
<feature type="binding site" evidence="1">
    <location>
        <position position="256"/>
    </location>
    <ligand>
        <name>S-adenosyl-L-methionine</name>
        <dbReference type="ChEBI" id="CHEBI:59789"/>
    </ligand>
</feature>
<feature type="binding site" evidence="1">
    <location>
        <position position="272"/>
    </location>
    <ligand>
        <name>S-adenosyl-L-methionine</name>
        <dbReference type="ChEBI" id="CHEBI:59789"/>
    </ligand>
</feature>